<dbReference type="EMBL" id="L77117">
    <property type="protein sequence ID" value="AAB99296.1"/>
    <property type="molecule type" value="Genomic_DNA"/>
</dbReference>
<dbReference type="PIR" id="A64461">
    <property type="entry name" value="A64461"/>
</dbReference>
<dbReference type="RefSeq" id="WP_010870806.1">
    <property type="nucleotide sequence ID" value="NC_000909.1"/>
</dbReference>
<dbReference type="STRING" id="243232.MJ_1290"/>
<dbReference type="PaxDb" id="243232-MJ_1290"/>
<dbReference type="EnsemblBacteria" id="AAB99296">
    <property type="protein sequence ID" value="AAB99296"/>
    <property type="gene ID" value="MJ_1290"/>
</dbReference>
<dbReference type="GeneID" id="1452191"/>
<dbReference type="KEGG" id="mja:MJ_1290"/>
<dbReference type="eggNOG" id="arCOG08273">
    <property type="taxonomic scope" value="Archaea"/>
</dbReference>
<dbReference type="HOGENOM" id="CLU_978634_0_0_2"/>
<dbReference type="InParanoid" id="Q58686"/>
<dbReference type="OrthoDB" id="66075at2157"/>
<dbReference type="Proteomes" id="UP000000805">
    <property type="component" value="Chromosome"/>
</dbReference>
<dbReference type="GO" id="GO:0005886">
    <property type="term" value="C:plasma membrane"/>
    <property type="evidence" value="ECO:0007669"/>
    <property type="project" value="UniProtKB-SubCell"/>
</dbReference>
<keyword id="KW-1003">Cell membrane</keyword>
<keyword id="KW-0472">Membrane</keyword>
<keyword id="KW-1185">Reference proteome</keyword>
<keyword id="KW-0812">Transmembrane</keyword>
<keyword id="KW-1133">Transmembrane helix</keyword>
<feature type="chain" id="PRO_0000107257" description="Uncharacterized protein MJ1290">
    <location>
        <begin position="1"/>
        <end position="312"/>
    </location>
</feature>
<feature type="transmembrane region" description="Helical" evidence="1">
    <location>
        <begin position="4"/>
        <end position="24"/>
    </location>
</feature>
<feature type="transmembrane region" description="Helical" evidence="1">
    <location>
        <begin position="286"/>
        <end position="306"/>
    </location>
</feature>
<gene>
    <name type="ordered locus">MJ1290</name>
</gene>
<sequence length="312" mass="35823">MKKAIYLLILCIFGLFSVYFTYAENISDISNTTSKNISSSNISHNNIIYSNINYNEILYIIVKNNTAYVKDVINGTNNPYHIKSAGIILYEKIYGYNYSNLLYRNSSNSLIFYYNFSVDKINYTINITIPQIEDYVGSLGGPIRMRIPPNNVKIIIVAENKLAETNGKYILEYNKTDKKVISLIYLDNVSSICNIYYTKFFNSSEFYGYAVANVTSITENRTSYTIKNPKGTFTFDRKYNVFVSNKTAYLKEPYLYVKLYNSTIDDIIILENNKISENSTKFMSNYLLSFIGIIIGFGIIGLAIYLSKRGRK</sequence>
<protein>
    <recommendedName>
        <fullName>Uncharacterized protein MJ1290</fullName>
    </recommendedName>
</protein>
<proteinExistence type="predicted"/>
<name>Y1290_METJA</name>
<evidence type="ECO:0000255" key="1"/>
<evidence type="ECO:0000305" key="2"/>
<accession>Q58686</accession>
<comment type="subcellular location">
    <subcellularLocation>
        <location evidence="2">Cell membrane</location>
        <topology evidence="2">Multi-pass membrane protein</topology>
    </subcellularLocation>
</comment>
<organism>
    <name type="scientific">Methanocaldococcus jannaschii (strain ATCC 43067 / DSM 2661 / JAL-1 / JCM 10045 / NBRC 100440)</name>
    <name type="common">Methanococcus jannaschii</name>
    <dbReference type="NCBI Taxonomy" id="243232"/>
    <lineage>
        <taxon>Archaea</taxon>
        <taxon>Methanobacteriati</taxon>
        <taxon>Methanobacteriota</taxon>
        <taxon>Methanomada group</taxon>
        <taxon>Methanococci</taxon>
        <taxon>Methanococcales</taxon>
        <taxon>Methanocaldococcaceae</taxon>
        <taxon>Methanocaldococcus</taxon>
    </lineage>
</organism>
<reference key="1">
    <citation type="journal article" date="1996" name="Science">
        <title>Complete genome sequence of the methanogenic archaeon, Methanococcus jannaschii.</title>
        <authorList>
            <person name="Bult C.J."/>
            <person name="White O."/>
            <person name="Olsen G.J."/>
            <person name="Zhou L."/>
            <person name="Fleischmann R.D."/>
            <person name="Sutton G.G."/>
            <person name="Blake J.A."/>
            <person name="FitzGerald L.M."/>
            <person name="Clayton R.A."/>
            <person name="Gocayne J.D."/>
            <person name="Kerlavage A.R."/>
            <person name="Dougherty B.A."/>
            <person name="Tomb J.-F."/>
            <person name="Adams M.D."/>
            <person name="Reich C.I."/>
            <person name="Overbeek R."/>
            <person name="Kirkness E.F."/>
            <person name="Weinstock K.G."/>
            <person name="Merrick J.M."/>
            <person name="Glodek A."/>
            <person name="Scott J.L."/>
            <person name="Geoghagen N.S.M."/>
            <person name="Weidman J.F."/>
            <person name="Fuhrmann J.L."/>
            <person name="Nguyen D."/>
            <person name="Utterback T.R."/>
            <person name="Kelley J.M."/>
            <person name="Peterson J.D."/>
            <person name="Sadow P.W."/>
            <person name="Hanna M.C."/>
            <person name="Cotton M.D."/>
            <person name="Roberts K.M."/>
            <person name="Hurst M.A."/>
            <person name="Kaine B.P."/>
            <person name="Borodovsky M."/>
            <person name="Klenk H.-P."/>
            <person name="Fraser C.M."/>
            <person name="Smith H.O."/>
            <person name="Woese C.R."/>
            <person name="Venter J.C."/>
        </authorList>
    </citation>
    <scope>NUCLEOTIDE SEQUENCE [LARGE SCALE GENOMIC DNA]</scope>
    <source>
        <strain>ATCC 43067 / DSM 2661 / JAL-1 / JCM 10045 / NBRC 100440</strain>
    </source>
</reference>
<reference key="2">
    <citation type="submission" date="1998-02" db="EMBL/GenBank/DDBJ databases">
        <authorList>
            <person name="Bult C.J."/>
            <person name="White O."/>
            <person name="Olsen G.J."/>
            <person name="Zhou L."/>
            <person name="Fleischmann R.D."/>
            <person name="Sutton G.G."/>
            <person name="Blake J.A."/>
            <person name="FitzGerald L.M."/>
            <person name="Clayton R.A."/>
            <person name="Gocayne J.D."/>
            <person name="Kerlavage A.R."/>
            <person name="Dougherty B.A."/>
            <person name="Tomb J.-F."/>
            <person name="Adams M.D."/>
            <person name="Reich C.I."/>
            <person name="Overbeek R."/>
            <person name="Kirkness E.F."/>
            <person name="Weinstock K.G."/>
            <person name="Merrick J.M."/>
            <person name="Glodek A."/>
            <person name="Scott J.L."/>
            <person name="Geoghagen N.S.M."/>
            <person name="Weidman J.F."/>
            <person name="Fuhrmann J.L."/>
            <person name="Nguyen D."/>
            <person name="Utterback T.R."/>
            <person name="Kelley J.M."/>
            <person name="Peterson J.D."/>
            <person name="Sadow P.W."/>
            <person name="Hanna M.C."/>
            <person name="Cotton M.D."/>
            <person name="Roberts K.M."/>
            <person name="Hurst M.A."/>
            <person name="Kaine B.P."/>
            <person name="Borodovsky M."/>
            <person name="Klenk H.-P."/>
            <person name="Fraser C.M."/>
            <person name="Smith H.O."/>
            <person name="Woese C.R."/>
            <person name="Venter J.C."/>
        </authorList>
    </citation>
    <scope>SEQUENCE REVISION</scope>
</reference>